<evidence type="ECO:0000255" key="1">
    <source>
        <dbReference type="HAMAP-Rule" id="MF_00106"/>
    </source>
</evidence>
<accession>A4TNC6</accession>
<comment type="function">
    <text evidence="1">Catalyzes the dehydration of D-mannonate.</text>
</comment>
<comment type="catalytic activity">
    <reaction evidence="1">
        <text>D-mannonate = 2-dehydro-3-deoxy-D-gluconate + H2O</text>
        <dbReference type="Rhea" id="RHEA:20097"/>
        <dbReference type="ChEBI" id="CHEBI:15377"/>
        <dbReference type="ChEBI" id="CHEBI:17767"/>
        <dbReference type="ChEBI" id="CHEBI:57990"/>
        <dbReference type="EC" id="4.2.1.8"/>
    </reaction>
</comment>
<comment type="cofactor">
    <cofactor evidence="1">
        <name>Fe(2+)</name>
        <dbReference type="ChEBI" id="CHEBI:29033"/>
    </cofactor>
    <cofactor evidence="1">
        <name>Mn(2+)</name>
        <dbReference type="ChEBI" id="CHEBI:29035"/>
    </cofactor>
</comment>
<comment type="pathway">
    <text evidence="1">Carbohydrate metabolism; pentose and glucuronate interconversion.</text>
</comment>
<comment type="similarity">
    <text evidence="1">Belongs to the mannonate dehydratase family.</text>
</comment>
<protein>
    <recommendedName>
        <fullName evidence="1">Mannonate dehydratase</fullName>
        <ecNumber evidence="1">4.2.1.8</ecNumber>
    </recommendedName>
    <alternativeName>
        <fullName evidence="1">D-mannonate hydro-lyase</fullName>
    </alternativeName>
</protein>
<name>UXUA_YERPP</name>
<feature type="chain" id="PRO_1000034344" description="Mannonate dehydratase">
    <location>
        <begin position="1"/>
        <end position="397"/>
    </location>
</feature>
<dbReference type="EC" id="4.2.1.8" evidence="1"/>
<dbReference type="EMBL" id="CP000668">
    <property type="protein sequence ID" value="ABP40788.1"/>
    <property type="molecule type" value="Genomic_DNA"/>
</dbReference>
<dbReference type="RefSeq" id="WP_002208813.1">
    <property type="nucleotide sequence ID" value="NZ_CP009715.1"/>
</dbReference>
<dbReference type="SMR" id="A4TNC6"/>
<dbReference type="GeneID" id="57977416"/>
<dbReference type="KEGG" id="ypp:YPDSF_2413"/>
<dbReference type="PATRIC" id="fig|386656.14.peg.3921"/>
<dbReference type="UniPathway" id="UPA00246"/>
<dbReference type="GO" id="GO:0008198">
    <property type="term" value="F:ferrous iron binding"/>
    <property type="evidence" value="ECO:0007669"/>
    <property type="project" value="TreeGrafter"/>
</dbReference>
<dbReference type="GO" id="GO:0030145">
    <property type="term" value="F:manganese ion binding"/>
    <property type="evidence" value="ECO:0007669"/>
    <property type="project" value="TreeGrafter"/>
</dbReference>
<dbReference type="GO" id="GO:0008927">
    <property type="term" value="F:mannonate dehydratase activity"/>
    <property type="evidence" value="ECO:0007669"/>
    <property type="project" value="UniProtKB-UniRule"/>
</dbReference>
<dbReference type="GO" id="GO:0042840">
    <property type="term" value="P:D-glucuronate catabolic process"/>
    <property type="evidence" value="ECO:0007669"/>
    <property type="project" value="TreeGrafter"/>
</dbReference>
<dbReference type="FunFam" id="3.20.20.150:FF:000010">
    <property type="entry name" value="Mannonate dehydratase"/>
    <property type="match status" value="1"/>
</dbReference>
<dbReference type="Gene3D" id="3.20.20.150">
    <property type="entry name" value="Divalent-metal-dependent TIM barrel enzymes"/>
    <property type="match status" value="1"/>
</dbReference>
<dbReference type="HAMAP" id="MF_00106">
    <property type="entry name" value="UxuA"/>
    <property type="match status" value="1"/>
</dbReference>
<dbReference type="InterPro" id="IPR004628">
    <property type="entry name" value="Man_deHydtase"/>
</dbReference>
<dbReference type="InterPro" id="IPR036237">
    <property type="entry name" value="Xyl_isomerase-like_sf"/>
</dbReference>
<dbReference type="NCBIfam" id="NF003027">
    <property type="entry name" value="PRK03906.1"/>
    <property type="match status" value="1"/>
</dbReference>
<dbReference type="NCBIfam" id="TIGR00695">
    <property type="entry name" value="uxuA"/>
    <property type="match status" value="1"/>
</dbReference>
<dbReference type="PANTHER" id="PTHR30387">
    <property type="entry name" value="MANNONATE DEHYDRATASE"/>
    <property type="match status" value="1"/>
</dbReference>
<dbReference type="PANTHER" id="PTHR30387:SF2">
    <property type="entry name" value="MANNONATE DEHYDRATASE"/>
    <property type="match status" value="1"/>
</dbReference>
<dbReference type="Pfam" id="PF03786">
    <property type="entry name" value="UxuA"/>
    <property type="match status" value="1"/>
</dbReference>
<dbReference type="PIRSF" id="PIRSF016049">
    <property type="entry name" value="Man_dehyd"/>
    <property type="match status" value="1"/>
</dbReference>
<dbReference type="SUPFAM" id="SSF51658">
    <property type="entry name" value="Xylose isomerase-like"/>
    <property type="match status" value="1"/>
</dbReference>
<organism>
    <name type="scientific">Yersinia pestis (strain Pestoides F)</name>
    <dbReference type="NCBI Taxonomy" id="386656"/>
    <lineage>
        <taxon>Bacteria</taxon>
        <taxon>Pseudomonadati</taxon>
        <taxon>Pseudomonadota</taxon>
        <taxon>Gammaproteobacteria</taxon>
        <taxon>Enterobacterales</taxon>
        <taxon>Yersiniaceae</taxon>
        <taxon>Yersinia</taxon>
    </lineage>
</organism>
<reference key="1">
    <citation type="submission" date="2007-02" db="EMBL/GenBank/DDBJ databases">
        <title>Complete sequence of chromosome of Yersinia pestis Pestoides F.</title>
        <authorList>
            <consortium name="US DOE Joint Genome Institute"/>
            <person name="Copeland A."/>
            <person name="Lucas S."/>
            <person name="Lapidus A."/>
            <person name="Barry K."/>
            <person name="Detter J.C."/>
            <person name="Glavina del Rio T."/>
            <person name="Hammon N."/>
            <person name="Israni S."/>
            <person name="Dalin E."/>
            <person name="Tice H."/>
            <person name="Pitluck S."/>
            <person name="Di Bartolo G."/>
            <person name="Chain P."/>
            <person name="Malfatti S."/>
            <person name="Shin M."/>
            <person name="Vergez L."/>
            <person name="Schmutz J."/>
            <person name="Larimer F."/>
            <person name="Land M."/>
            <person name="Hauser L."/>
            <person name="Worsham P."/>
            <person name="Chu M."/>
            <person name="Bearden S."/>
            <person name="Garcia E."/>
            <person name="Richardson P."/>
        </authorList>
    </citation>
    <scope>NUCLEOTIDE SEQUENCE [LARGE SCALE GENOMIC DNA]</scope>
    <source>
        <strain>Pestoides F</strain>
    </source>
</reference>
<sequence length="397" mass="44890">MEQTWRWYGPNDPVSLDDIRQAGATGVVTALHHIPNGVVWPVSEIKQRQAELAAKNLVWSVVESVPIHEDIKTHSGNYQQYIENYQQTLRNIAECGIDTVCYNFMPILDWTRTDLEYELPDGSKALRFDQIAFAAFELHILKRPGASNDYTAEEQVQAEAYFNAMTEADIAKLTGNIIAGLPGAEEGYTLDQFRARLAEYDGIDKAQLRENMAYFLRAIIPVAEQVGLRMAVHPDDPPRPILGLPRIVSTIEDMQWLKETVDSIHNGFTMCTGSYGVRADNDLVKMIETFGDRIHFTHLRSTCREGNPKTFHEGGHLQGDVDMYSVVKAILTEEQRRQSLGDMRPIPMRPDHGHQMLDDLHKKTNPGYSAIGRLKGLAEVRGVELALKRTFFPELKQ</sequence>
<gene>
    <name evidence="1" type="primary">uxuA</name>
    <name type="ordered locus">YPDSF_2413</name>
</gene>
<proteinExistence type="inferred from homology"/>
<keyword id="KW-0408">Iron</keyword>
<keyword id="KW-0456">Lyase</keyword>
<keyword id="KW-0464">Manganese</keyword>